<keyword id="KW-0963">Cytoplasm</keyword>
<keyword id="KW-0342">GTP-binding</keyword>
<keyword id="KW-0436">Ligase</keyword>
<keyword id="KW-0460">Magnesium</keyword>
<keyword id="KW-0479">Metal-binding</keyword>
<keyword id="KW-0547">Nucleotide-binding</keyword>
<keyword id="KW-0658">Purine biosynthesis</keyword>
<keyword id="KW-1185">Reference proteome</keyword>
<protein>
    <recommendedName>
        <fullName evidence="1">Adenylosuccinate synthetase</fullName>
        <shortName evidence="1">AMPSase</shortName>
        <shortName evidence="1">AdSS</shortName>
        <ecNumber evidence="1">6.3.4.4</ecNumber>
    </recommendedName>
    <alternativeName>
        <fullName evidence="1">IMP--aspartate ligase</fullName>
    </alternativeName>
</protein>
<sequence length="428" mass="47389">MSSVVVVGTQWGDEGKGKITDFLSENAEVIARYQGGNNAGHTIVFNGEKYKLHLIPSGIFYKDKICVIGNGMVVDPKALVAELSYLHERGISTDNLRISNRAHVILPYHLKLDELEEERKGANKIGTTKKGIGPAYMDKAARIGIRIVDLLDRDVFAEKLERNLREKNTLLEKVYGVEGFRLEDIFEEYYEYGQHIAKYVCDTSVVLNNALDEGRRVLFEGAQGVMLDIDQGTYPFVTSSNPVAGGVTIGAGVGPTKIKHVVGVAKAYTTRVGDGPFPTELHDEIGDRIREVGREYGTTTGRPRRVGWFDSVVVRHARRVSGITDLSLNSIDVLTGIETLKICVAYRYRGQVLEEFPASLKVLAECEPIYEELPGWTEDITGVKSLDELPANARHYVERISQLTGIPLSIFSVGPDRSQTNVVRSVYA</sequence>
<comment type="function">
    <text evidence="1">Plays an important role in the de novo pathway of purine nucleotide biosynthesis. Catalyzes the first committed step in the biosynthesis of AMP from IMP.</text>
</comment>
<comment type="catalytic activity">
    <reaction evidence="1">
        <text>IMP + L-aspartate + GTP = N(6)-(1,2-dicarboxyethyl)-AMP + GDP + phosphate + 2 H(+)</text>
        <dbReference type="Rhea" id="RHEA:15753"/>
        <dbReference type="ChEBI" id="CHEBI:15378"/>
        <dbReference type="ChEBI" id="CHEBI:29991"/>
        <dbReference type="ChEBI" id="CHEBI:37565"/>
        <dbReference type="ChEBI" id="CHEBI:43474"/>
        <dbReference type="ChEBI" id="CHEBI:57567"/>
        <dbReference type="ChEBI" id="CHEBI:58053"/>
        <dbReference type="ChEBI" id="CHEBI:58189"/>
        <dbReference type="EC" id="6.3.4.4"/>
    </reaction>
</comment>
<comment type="cofactor">
    <cofactor evidence="1">
        <name>Mg(2+)</name>
        <dbReference type="ChEBI" id="CHEBI:18420"/>
    </cofactor>
    <text evidence="1">Binds 1 Mg(2+) ion per subunit.</text>
</comment>
<comment type="pathway">
    <text evidence="1">Purine metabolism; AMP biosynthesis via de novo pathway; AMP from IMP: step 1/2.</text>
</comment>
<comment type="subunit">
    <text evidence="1">Homodimer.</text>
</comment>
<comment type="subcellular location">
    <subcellularLocation>
        <location evidence="1">Cytoplasm</location>
    </subcellularLocation>
</comment>
<comment type="similarity">
    <text evidence="1">Belongs to the adenylosuccinate synthetase family.</text>
</comment>
<feature type="chain" id="PRO_0000224282" description="Adenylosuccinate synthetase">
    <location>
        <begin position="1"/>
        <end position="428"/>
    </location>
</feature>
<feature type="active site" description="Proton acceptor" evidence="1">
    <location>
        <position position="13"/>
    </location>
</feature>
<feature type="active site" description="Proton donor" evidence="1">
    <location>
        <position position="41"/>
    </location>
</feature>
<feature type="binding site" evidence="1">
    <location>
        <begin position="12"/>
        <end position="18"/>
    </location>
    <ligand>
        <name>GTP</name>
        <dbReference type="ChEBI" id="CHEBI:37565"/>
    </ligand>
</feature>
<feature type="binding site" description="in other chain" evidence="1">
    <location>
        <begin position="13"/>
        <end position="16"/>
    </location>
    <ligand>
        <name>IMP</name>
        <dbReference type="ChEBI" id="CHEBI:58053"/>
        <note>ligand shared between dimeric partners</note>
    </ligand>
</feature>
<feature type="binding site" evidence="1">
    <location>
        <position position="13"/>
    </location>
    <ligand>
        <name>Mg(2+)</name>
        <dbReference type="ChEBI" id="CHEBI:18420"/>
    </ligand>
</feature>
<feature type="binding site" description="in other chain" evidence="1">
    <location>
        <begin position="38"/>
        <end position="41"/>
    </location>
    <ligand>
        <name>IMP</name>
        <dbReference type="ChEBI" id="CHEBI:58053"/>
        <note>ligand shared between dimeric partners</note>
    </ligand>
</feature>
<feature type="binding site" evidence="1">
    <location>
        <begin position="40"/>
        <end position="42"/>
    </location>
    <ligand>
        <name>GTP</name>
        <dbReference type="ChEBI" id="CHEBI:37565"/>
    </ligand>
</feature>
<feature type="binding site" evidence="1">
    <location>
        <position position="40"/>
    </location>
    <ligand>
        <name>Mg(2+)</name>
        <dbReference type="ChEBI" id="CHEBI:18420"/>
    </ligand>
</feature>
<feature type="binding site" description="in other chain" evidence="1">
    <location>
        <position position="128"/>
    </location>
    <ligand>
        <name>IMP</name>
        <dbReference type="ChEBI" id="CHEBI:58053"/>
        <note>ligand shared between dimeric partners</note>
    </ligand>
</feature>
<feature type="binding site" evidence="1">
    <location>
        <position position="142"/>
    </location>
    <ligand>
        <name>IMP</name>
        <dbReference type="ChEBI" id="CHEBI:58053"/>
        <note>ligand shared between dimeric partners</note>
    </ligand>
</feature>
<feature type="binding site" description="in other chain" evidence="1">
    <location>
        <position position="223"/>
    </location>
    <ligand>
        <name>IMP</name>
        <dbReference type="ChEBI" id="CHEBI:58053"/>
        <note>ligand shared between dimeric partners</note>
    </ligand>
</feature>
<feature type="binding site" description="in other chain" evidence="1">
    <location>
        <position position="238"/>
    </location>
    <ligand>
        <name>IMP</name>
        <dbReference type="ChEBI" id="CHEBI:58053"/>
        <note>ligand shared between dimeric partners</note>
    </ligand>
</feature>
<feature type="binding site" evidence="1">
    <location>
        <begin position="298"/>
        <end position="304"/>
    </location>
    <ligand>
        <name>substrate</name>
    </ligand>
</feature>
<feature type="binding site" description="in other chain" evidence="1">
    <location>
        <position position="302"/>
    </location>
    <ligand>
        <name>IMP</name>
        <dbReference type="ChEBI" id="CHEBI:58053"/>
        <note>ligand shared between dimeric partners</note>
    </ligand>
</feature>
<feature type="binding site" evidence="1">
    <location>
        <position position="304"/>
    </location>
    <ligand>
        <name>GTP</name>
        <dbReference type="ChEBI" id="CHEBI:37565"/>
    </ligand>
</feature>
<feature type="binding site" evidence="1">
    <location>
        <begin position="330"/>
        <end position="332"/>
    </location>
    <ligand>
        <name>GTP</name>
        <dbReference type="ChEBI" id="CHEBI:37565"/>
    </ligand>
</feature>
<feature type="binding site" evidence="1">
    <location>
        <begin position="412"/>
        <end position="414"/>
    </location>
    <ligand>
        <name>GTP</name>
        <dbReference type="ChEBI" id="CHEBI:37565"/>
    </ligand>
</feature>
<dbReference type="EC" id="6.3.4.4" evidence="1"/>
<dbReference type="EMBL" id="BA000043">
    <property type="protein sequence ID" value="BAD77760.1"/>
    <property type="molecule type" value="Genomic_DNA"/>
</dbReference>
<dbReference type="RefSeq" id="WP_011232939.1">
    <property type="nucleotide sequence ID" value="NC_006510.1"/>
</dbReference>
<dbReference type="SMR" id="Q5KU76"/>
<dbReference type="STRING" id="235909.GK3475"/>
<dbReference type="KEGG" id="gka:GK3475"/>
<dbReference type="eggNOG" id="COG0104">
    <property type="taxonomic scope" value="Bacteria"/>
</dbReference>
<dbReference type="HOGENOM" id="CLU_029848_0_0_9"/>
<dbReference type="UniPathway" id="UPA00075">
    <property type="reaction ID" value="UER00335"/>
</dbReference>
<dbReference type="Proteomes" id="UP000001172">
    <property type="component" value="Chromosome"/>
</dbReference>
<dbReference type="GO" id="GO:0005737">
    <property type="term" value="C:cytoplasm"/>
    <property type="evidence" value="ECO:0007669"/>
    <property type="project" value="UniProtKB-SubCell"/>
</dbReference>
<dbReference type="GO" id="GO:0004019">
    <property type="term" value="F:adenylosuccinate synthase activity"/>
    <property type="evidence" value="ECO:0007669"/>
    <property type="project" value="UniProtKB-UniRule"/>
</dbReference>
<dbReference type="GO" id="GO:0005525">
    <property type="term" value="F:GTP binding"/>
    <property type="evidence" value="ECO:0007669"/>
    <property type="project" value="UniProtKB-UniRule"/>
</dbReference>
<dbReference type="GO" id="GO:0000287">
    <property type="term" value="F:magnesium ion binding"/>
    <property type="evidence" value="ECO:0007669"/>
    <property type="project" value="UniProtKB-UniRule"/>
</dbReference>
<dbReference type="GO" id="GO:0044208">
    <property type="term" value="P:'de novo' AMP biosynthetic process"/>
    <property type="evidence" value="ECO:0007669"/>
    <property type="project" value="UniProtKB-UniRule"/>
</dbReference>
<dbReference type="GO" id="GO:0046040">
    <property type="term" value="P:IMP metabolic process"/>
    <property type="evidence" value="ECO:0007669"/>
    <property type="project" value="TreeGrafter"/>
</dbReference>
<dbReference type="CDD" id="cd03108">
    <property type="entry name" value="AdSS"/>
    <property type="match status" value="1"/>
</dbReference>
<dbReference type="FunFam" id="1.10.300.10:FF:000001">
    <property type="entry name" value="Adenylosuccinate synthetase"/>
    <property type="match status" value="1"/>
</dbReference>
<dbReference type="FunFam" id="3.90.170.10:FF:000001">
    <property type="entry name" value="Adenylosuccinate synthetase"/>
    <property type="match status" value="1"/>
</dbReference>
<dbReference type="Gene3D" id="3.40.440.10">
    <property type="entry name" value="Adenylosuccinate Synthetase, subunit A, domain 1"/>
    <property type="match status" value="1"/>
</dbReference>
<dbReference type="Gene3D" id="1.10.300.10">
    <property type="entry name" value="Adenylosuccinate Synthetase, subunit A, domain 2"/>
    <property type="match status" value="1"/>
</dbReference>
<dbReference type="Gene3D" id="3.90.170.10">
    <property type="entry name" value="Adenylosuccinate Synthetase, subunit A, domain 3"/>
    <property type="match status" value="1"/>
</dbReference>
<dbReference type="HAMAP" id="MF_00011">
    <property type="entry name" value="Adenylosucc_synth"/>
    <property type="match status" value="1"/>
</dbReference>
<dbReference type="InterPro" id="IPR018220">
    <property type="entry name" value="Adenylosuccin_syn_GTP-bd"/>
</dbReference>
<dbReference type="InterPro" id="IPR033128">
    <property type="entry name" value="Adenylosuccin_syn_Lys_AS"/>
</dbReference>
<dbReference type="InterPro" id="IPR042109">
    <property type="entry name" value="Adenylosuccinate_synth_dom1"/>
</dbReference>
<dbReference type="InterPro" id="IPR042110">
    <property type="entry name" value="Adenylosuccinate_synth_dom2"/>
</dbReference>
<dbReference type="InterPro" id="IPR042111">
    <property type="entry name" value="Adenylosuccinate_synth_dom3"/>
</dbReference>
<dbReference type="InterPro" id="IPR001114">
    <property type="entry name" value="Adenylosuccinate_synthetase"/>
</dbReference>
<dbReference type="InterPro" id="IPR027417">
    <property type="entry name" value="P-loop_NTPase"/>
</dbReference>
<dbReference type="NCBIfam" id="NF002223">
    <property type="entry name" value="PRK01117.1"/>
    <property type="match status" value="1"/>
</dbReference>
<dbReference type="NCBIfam" id="TIGR00184">
    <property type="entry name" value="purA"/>
    <property type="match status" value="1"/>
</dbReference>
<dbReference type="PANTHER" id="PTHR11846">
    <property type="entry name" value="ADENYLOSUCCINATE SYNTHETASE"/>
    <property type="match status" value="1"/>
</dbReference>
<dbReference type="PANTHER" id="PTHR11846:SF0">
    <property type="entry name" value="ADENYLOSUCCINATE SYNTHETASE"/>
    <property type="match status" value="1"/>
</dbReference>
<dbReference type="Pfam" id="PF00709">
    <property type="entry name" value="Adenylsucc_synt"/>
    <property type="match status" value="1"/>
</dbReference>
<dbReference type="SMART" id="SM00788">
    <property type="entry name" value="Adenylsucc_synt"/>
    <property type="match status" value="1"/>
</dbReference>
<dbReference type="SUPFAM" id="SSF52540">
    <property type="entry name" value="P-loop containing nucleoside triphosphate hydrolases"/>
    <property type="match status" value="1"/>
</dbReference>
<dbReference type="PROSITE" id="PS01266">
    <property type="entry name" value="ADENYLOSUCCIN_SYN_1"/>
    <property type="match status" value="1"/>
</dbReference>
<dbReference type="PROSITE" id="PS00513">
    <property type="entry name" value="ADENYLOSUCCIN_SYN_2"/>
    <property type="match status" value="1"/>
</dbReference>
<gene>
    <name evidence="1" type="primary">purA</name>
    <name type="ordered locus">GK3475</name>
</gene>
<evidence type="ECO:0000255" key="1">
    <source>
        <dbReference type="HAMAP-Rule" id="MF_00011"/>
    </source>
</evidence>
<name>PURA_GEOKA</name>
<organism>
    <name type="scientific">Geobacillus kaustophilus (strain HTA426)</name>
    <dbReference type="NCBI Taxonomy" id="235909"/>
    <lineage>
        <taxon>Bacteria</taxon>
        <taxon>Bacillati</taxon>
        <taxon>Bacillota</taxon>
        <taxon>Bacilli</taxon>
        <taxon>Bacillales</taxon>
        <taxon>Anoxybacillaceae</taxon>
        <taxon>Geobacillus</taxon>
        <taxon>Geobacillus thermoleovorans group</taxon>
    </lineage>
</organism>
<proteinExistence type="inferred from homology"/>
<accession>Q5KU76</accession>
<reference key="1">
    <citation type="journal article" date="2004" name="Nucleic Acids Res.">
        <title>Thermoadaptation trait revealed by the genome sequence of thermophilic Geobacillus kaustophilus.</title>
        <authorList>
            <person name="Takami H."/>
            <person name="Takaki Y."/>
            <person name="Chee G.-J."/>
            <person name="Nishi S."/>
            <person name="Shimamura S."/>
            <person name="Suzuki H."/>
            <person name="Matsui S."/>
            <person name="Uchiyama I."/>
        </authorList>
    </citation>
    <scope>NUCLEOTIDE SEQUENCE [LARGE SCALE GENOMIC DNA]</scope>
    <source>
        <strain>HTA426</strain>
    </source>
</reference>